<sequence>MPIRLHIFVSSARHAINSSALICRFIAFHLSPLLIHLSYFLIIDVLGFVALVVLRPSNHKYNPRYIDMFFLSTSAVTVTGLATTQMEDLSSSQIAVLTLLMFLGSEMFLSFLGLVLESSKQNKHDPENRRVSSVTVCEQSHLEEAIPQTPSMNSTDIKRSCHKYLVFVVLAYMIIILVTGSLLVFMYIAHVSSARDVLTRKSINKALFSISVTVSSFTNGGLLPTNESMAVFSSNNGLLLLLIGQILAGSTLLPMFLRLVIWALRGLRLAKAEEPDFMMNNSSSVGFSHLLPNLQTIFLAAVEVAFVGMTVILFCCLNWDSAVFAGLTSLQKITNALFMAVSARQAGENSIDCSLVAPAALVLFMVMMYTPSLTKLFSACQDHKQIGPESDDRTSKGKPFLKTMAFSPLAFNTTVIMLVCITERRSISTDPLNFSTFNIIFEVISAYGNIGLSTGYSCSRQLQHQDGIACHEKPYSFSGWWSEPGKLILVLAMLYGRLNSKDSTSARTR</sequence>
<name>HKT24_ORYSJ</name>
<comment type="function">
    <text evidence="2 3">High-affinity potassium transporter that does not show potassium-sodium cotransport (PubMed:20351263, PubMed:21610181). Potassium transport seems to be independent of sodium (PubMed:21610181). Mediates transport of the divalent cations magnesium and calcium in the absence of competing potassium ions (PubMed:20351263, PubMed:21610181). Selectivity for potassium is dominant over divalent cations, and magnesium and calcium transport may be small and may depend on competing potassium concentrations (PubMed:20351263, PubMed:21610181).</text>
</comment>
<comment type="catalytic activity">
    <reaction evidence="2 3">
        <text>K(+)(in) = K(+)(out)</text>
        <dbReference type="Rhea" id="RHEA:29463"/>
        <dbReference type="ChEBI" id="CHEBI:29103"/>
    </reaction>
</comment>
<comment type="catalytic activity">
    <reaction evidence="2 3">
        <text>Mg(2+)(in) = Mg(2+)(out)</text>
        <dbReference type="Rhea" id="RHEA:29827"/>
        <dbReference type="ChEBI" id="CHEBI:18420"/>
    </reaction>
</comment>
<comment type="catalytic activity">
    <reaction evidence="2 3">
        <text>Ca(2+)(in) = Ca(2+)(out)</text>
        <dbReference type="Rhea" id="RHEA:29671"/>
        <dbReference type="ChEBI" id="CHEBI:29108"/>
    </reaction>
</comment>
<comment type="subcellular location">
    <subcellularLocation>
        <location evidence="2 3">Cell membrane</location>
        <topology evidence="1">Multi-pass membrane protein</topology>
    </subcellularLocation>
    <text evidence="2 3">Localizes to the plasma membrane.</text>
</comment>
<comment type="tissue specificity">
    <text evidence="2">Expressed in spikelets, leaf blades, leaf sheaths, internodes, nodes, the base of stems and roots.</text>
</comment>
<comment type="domain">
    <text evidence="6">HKT transporters are proposed to contain 4 pore-forming regions enclosed by transmembrane segments with each containing a potassium channel-like selectivity filter motif.</text>
</comment>
<comment type="similarity">
    <text evidence="6">Belongs to the TrkH potassium transport family. HKT (TC 2.A.38.3) subfamily.</text>
</comment>
<organism>
    <name type="scientific">Oryza sativa subsp. japonica</name>
    <name type="common">Rice</name>
    <dbReference type="NCBI Taxonomy" id="39947"/>
    <lineage>
        <taxon>Eukaryota</taxon>
        <taxon>Viridiplantae</taxon>
        <taxon>Streptophyta</taxon>
        <taxon>Embryophyta</taxon>
        <taxon>Tracheophyta</taxon>
        <taxon>Spermatophyta</taxon>
        <taxon>Magnoliopsida</taxon>
        <taxon>Liliopsida</taxon>
        <taxon>Poales</taxon>
        <taxon>Poaceae</taxon>
        <taxon>BOP clade</taxon>
        <taxon>Oryzoideae</taxon>
        <taxon>Oryzeae</taxon>
        <taxon>Oryzinae</taxon>
        <taxon>Oryza</taxon>
        <taxon>Oryza sativa</taxon>
    </lineage>
</organism>
<gene>
    <name evidence="5" type="primary">HKT2;4</name>
    <name evidence="4" type="synonym">HKT9</name>
    <name evidence="8" type="ordered locus">Os06g0701600</name>
    <name evidence="6" type="ordered locus">LOC_Os06g48800</name>
    <name evidence="9" type="ORF">OsJ_22537</name>
    <name evidence="7" type="ORF">P0596H10.8</name>
</gene>
<evidence type="ECO:0000255" key="1"/>
<evidence type="ECO:0000269" key="2">
    <source>
    </source>
</evidence>
<evidence type="ECO:0000269" key="3">
    <source>
    </source>
</evidence>
<evidence type="ECO:0000303" key="4">
    <source>
    </source>
</evidence>
<evidence type="ECO:0000303" key="5">
    <source>
    </source>
</evidence>
<evidence type="ECO:0000305" key="6"/>
<evidence type="ECO:0000312" key="7">
    <source>
        <dbReference type="EMBL" id="BAD53774.1"/>
    </source>
</evidence>
<evidence type="ECO:0000312" key="8">
    <source>
        <dbReference type="EMBL" id="BAS99351.1"/>
    </source>
</evidence>
<evidence type="ECO:0000312" key="9">
    <source>
        <dbReference type="EMBL" id="EEE66306.1"/>
    </source>
</evidence>
<protein>
    <recommendedName>
        <fullName evidence="5">Cation transporter HKT2;4</fullName>
        <shortName evidence="5">OsHKT2;4</shortName>
    </recommendedName>
    <alternativeName>
        <fullName evidence="4">Cation transporter HKT9</fullName>
        <shortName evidence="4">OsHKT9</shortName>
    </alternativeName>
</protein>
<keyword id="KW-1003">Cell membrane</keyword>
<keyword id="KW-0406">Ion transport</keyword>
<keyword id="KW-0472">Membrane</keyword>
<keyword id="KW-1185">Reference proteome</keyword>
<keyword id="KW-0812">Transmembrane</keyword>
<keyword id="KW-1133">Transmembrane helix</keyword>
<keyword id="KW-0813">Transport</keyword>
<reference key="1">
    <citation type="journal article" date="2003" name="Plant J.">
        <title>Sodium transport and HKT transporters: the rice model.</title>
        <authorList>
            <person name="Garciadeblas B."/>
            <person name="Senn M.E."/>
            <person name="Banuelos M.A."/>
            <person name="Rodriguez-Navarro A."/>
        </authorList>
    </citation>
    <scope>NUCLEOTIDE SEQUENCE [GENOMIC DNA / MRNA]</scope>
    <scope>NOMENCLATURE</scope>
    <source>
        <strain>cv. Nipponbare</strain>
    </source>
</reference>
<reference key="2">
    <citation type="journal article" date="2005" name="Nature">
        <title>The map-based sequence of the rice genome.</title>
        <authorList>
            <consortium name="International rice genome sequencing project (IRGSP)"/>
        </authorList>
    </citation>
    <scope>NUCLEOTIDE SEQUENCE [LARGE SCALE GENOMIC DNA]</scope>
    <source>
        <strain>cv. Nipponbare</strain>
    </source>
</reference>
<reference key="3">
    <citation type="journal article" date="2008" name="Nucleic Acids Res.">
        <title>The rice annotation project database (RAP-DB): 2008 update.</title>
        <authorList>
            <consortium name="The rice annotation project (RAP)"/>
        </authorList>
    </citation>
    <scope>GENOME REANNOTATION</scope>
    <source>
        <strain>cv. Nipponbare</strain>
    </source>
</reference>
<reference key="4">
    <citation type="journal article" date="2013" name="Rice">
        <title>Improvement of the Oryza sativa Nipponbare reference genome using next generation sequence and optical map data.</title>
        <authorList>
            <person name="Kawahara Y."/>
            <person name="de la Bastide M."/>
            <person name="Hamilton J.P."/>
            <person name="Kanamori H."/>
            <person name="McCombie W.R."/>
            <person name="Ouyang S."/>
            <person name="Schwartz D.C."/>
            <person name="Tanaka T."/>
            <person name="Wu J."/>
            <person name="Zhou S."/>
            <person name="Childs K.L."/>
            <person name="Davidson R.M."/>
            <person name="Lin H."/>
            <person name="Quesada-Ocampo L."/>
            <person name="Vaillancourt B."/>
            <person name="Sakai H."/>
            <person name="Lee S.S."/>
            <person name="Kim J."/>
            <person name="Numa H."/>
            <person name="Itoh T."/>
            <person name="Buell C.R."/>
            <person name="Matsumoto T."/>
        </authorList>
    </citation>
    <scope>GENOME REANNOTATION</scope>
    <source>
        <strain>cv. Nipponbare</strain>
    </source>
</reference>
<reference key="5">
    <citation type="journal article" date="2005" name="PLoS Biol.">
        <title>The genomes of Oryza sativa: a history of duplications.</title>
        <authorList>
            <person name="Yu J."/>
            <person name="Wang J."/>
            <person name="Lin W."/>
            <person name="Li S."/>
            <person name="Li H."/>
            <person name="Zhou J."/>
            <person name="Ni P."/>
            <person name="Dong W."/>
            <person name="Hu S."/>
            <person name="Zeng C."/>
            <person name="Zhang J."/>
            <person name="Zhang Y."/>
            <person name="Li R."/>
            <person name="Xu Z."/>
            <person name="Li S."/>
            <person name="Li X."/>
            <person name="Zheng H."/>
            <person name="Cong L."/>
            <person name="Lin L."/>
            <person name="Yin J."/>
            <person name="Geng J."/>
            <person name="Li G."/>
            <person name="Shi J."/>
            <person name="Liu J."/>
            <person name="Lv H."/>
            <person name="Li J."/>
            <person name="Wang J."/>
            <person name="Deng Y."/>
            <person name="Ran L."/>
            <person name="Shi X."/>
            <person name="Wang X."/>
            <person name="Wu Q."/>
            <person name="Li C."/>
            <person name="Ren X."/>
            <person name="Wang J."/>
            <person name="Wang X."/>
            <person name="Li D."/>
            <person name="Liu D."/>
            <person name="Zhang X."/>
            <person name="Ji Z."/>
            <person name="Zhao W."/>
            <person name="Sun Y."/>
            <person name="Zhang Z."/>
            <person name="Bao J."/>
            <person name="Han Y."/>
            <person name="Dong L."/>
            <person name="Ji J."/>
            <person name="Chen P."/>
            <person name="Wu S."/>
            <person name="Liu J."/>
            <person name="Xiao Y."/>
            <person name="Bu D."/>
            <person name="Tan J."/>
            <person name="Yang L."/>
            <person name="Ye C."/>
            <person name="Zhang J."/>
            <person name="Xu J."/>
            <person name="Zhou Y."/>
            <person name="Yu Y."/>
            <person name="Zhang B."/>
            <person name="Zhuang S."/>
            <person name="Wei H."/>
            <person name="Liu B."/>
            <person name="Lei M."/>
            <person name="Yu H."/>
            <person name="Li Y."/>
            <person name="Xu H."/>
            <person name="Wei S."/>
            <person name="He X."/>
            <person name="Fang L."/>
            <person name="Zhang Z."/>
            <person name="Zhang Y."/>
            <person name="Huang X."/>
            <person name="Su Z."/>
            <person name="Tong W."/>
            <person name="Li J."/>
            <person name="Tong Z."/>
            <person name="Li S."/>
            <person name="Ye J."/>
            <person name="Wang L."/>
            <person name="Fang L."/>
            <person name="Lei T."/>
            <person name="Chen C.-S."/>
            <person name="Chen H.-C."/>
            <person name="Xu Z."/>
            <person name="Li H."/>
            <person name="Huang H."/>
            <person name="Zhang F."/>
            <person name="Xu H."/>
            <person name="Li N."/>
            <person name="Zhao C."/>
            <person name="Li S."/>
            <person name="Dong L."/>
            <person name="Huang Y."/>
            <person name="Li L."/>
            <person name="Xi Y."/>
            <person name="Qi Q."/>
            <person name="Li W."/>
            <person name="Zhang B."/>
            <person name="Hu W."/>
            <person name="Zhang Y."/>
            <person name="Tian X."/>
            <person name="Jiao Y."/>
            <person name="Liang X."/>
            <person name="Jin J."/>
            <person name="Gao L."/>
            <person name="Zheng W."/>
            <person name="Hao B."/>
            <person name="Liu S.-M."/>
            <person name="Wang W."/>
            <person name="Yuan L."/>
            <person name="Cao M."/>
            <person name="McDermott J."/>
            <person name="Samudrala R."/>
            <person name="Wang J."/>
            <person name="Wong G.K.-S."/>
            <person name="Yang H."/>
        </authorList>
    </citation>
    <scope>NUCLEOTIDE SEQUENCE [LARGE SCALE GENOMIC DNA]</scope>
    <source>
        <strain>cv. Nipponbare</strain>
    </source>
</reference>
<reference key="6">
    <citation type="journal article" date="2006" name="Trends Plant Sci.">
        <title>Nomenclature for HKT transporters, key determinants of plant salinity tolerance.</title>
        <authorList>
            <person name="Platten J.D."/>
            <person name="Cotsaftis O."/>
            <person name="Berthomieu P."/>
            <person name="Bohnert H."/>
            <person name="Davenport R.J."/>
            <person name="Fairbairn D.J."/>
            <person name="Horie T."/>
            <person name="Leigh R.A."/>
            <person name="Lin H.X."/>
            <person name="Luan S."/>
            <person name="Maeser P."/>
            <person name="Pantoja O."/>
            <person name="Rodriguez-Navarro A."/>
            <person name="Schachtman D.P."/>
            <person name="Schroeder J.I."/>
            <person name="Sentenac H."/>
            <person name="Uozumi N."/>
            <person name="Very A.A."/>
            <person name="Zhu J.K."/>
            <person name="Dennis E.S."/>
            <person name="Tester M."/>
        </authorList>
    </citation>
    <scope>GENE FAMILY</scope>
    <scope>NOMENCLATURE</scope>
</reference>
<reference key="7">
    <citation type="journal article" date="2010" name="Proc. Natl. Acad. Sci. U.S.A.">
        <title>A rice high-affinity potassium transporter (HKT) conceals a calcium-permeable cation channel.</title>
        <authorList>
            <person name="Lan W.Z."/>
            <person name="Wang W."/>
            <person name="Wang S.M."/>
            <person name="Li L.G."/>
            <person name="Buchanan B.B."/>
            <person name="Lin H.X."/>
            <person name="Gao J.P."/>
            <person name="Luan S."/>
        </authorList>
    </citation>
    <scope>FUNCTION</scope>
    <scope>TISSUE SPECIFICITY</scope>
    <scope>SUBCELLULAR LOCATION</scope>
</reference>
<reference key="8">
    <citation type="journal article" date="2011" name="Plant Physiol.">
        <title>K+ transport by the OsHKT2;4 transporter from rice with atypical Na+ transport properties and competition in permeation of K+ over Mg2+ and Ca2+ ions.</title>
        <authorList>
            <person name="Horie T."/>
            <person name="Brodsky D.E."/>
            <person name="Costa A."/>
            <person name="Kaneko T."/>
            <person name="Lo Schiavo F."/>
            <person name="Katsuhara M."/>
            <person name="Schroeder J.I."/>
        </authorList>
    </citation>
    <scope>FUNCTION</scope>
    <scope>SUBCELLULAR LOCATION</scope>
</reference>
<proteinExistence type="evidence at transcript level"/>
<dbReference type="EMBL" id="AJ491854">
    <property type="protein sequence ID" value="CAD37198.1"/>
    <property type="molecule type" value="Genomic_DNA"/>
</dbReference>
<dbReference type="EMBL" id="AJ491855">
    <property type="protein sequence ID" value="CAD37199.1"/>
    <property type="molecule type" value="mRNA"/>
</dbReference>
<dbReference type="EMBL" id="AP003726">
    <property type="protein sequence ID" value="BAD53774.1"/>
    <property type="molecule type" value="Genomic_DNA"/>
</dbReference>
<dbReference type="EMBL" id="AP008212">
    <property type="protein sequence ID" value="BAF20399.1"/>
    <property type="molecule type" value="Genomic_DNA"/>
</dbReference>
<dbReference type="EMBL" id="AP014962">
    <property type="protein sequence ID" value="BAS99351.1"/>
    <property type="molecule type" value="Genomic_DNA"/>
</dbReference>
<dbReference type="EMBL" id="CM000143">
    <property type="protein sequence ID" value="EEE66306.1"/>
    <property type="molecule type" value="Genomic_DNA"/>
</dbReference>
<dbReference type="RefSeq" id="NP_001408802.1">
    <property type="nucleotide sequence ID" value="NM_001421873.1"/>
</dbReference>
<dbReference type="RefSeq" id="XP_015641899.1">
    <property type="nucleotide sequence ID" value="XM_015786413.1"/>
</dbReference>
<dbReference type="SMR" id="Q8L4K5"/>
<dbReference type="FunCoup" id="Q8L4K5">
    <property type="interactions" value="6"/>
</dbReference>
<dbReference type="STRING" id="39947.Q8L4K5"/>
<dbReference type="PaxDb" id="39947-Q8L4K5"/>
<dbReference type="EnsemblPlants" id="Os06t0701600-01">
    <property type="protein sequence ID" value="Os06t0701600-01"/>
    <property type="gene ID" value="Os06g0701600"/>
</dbReference>
<dbReference type="GeneID" id="4341970"/>
<dbReference type="Gramene" id="Os06t0701600-01">
    <property type="protein sequence ID" value="Os06t0701600-01"/>
    <property type="gene ID" value="Os06g0701600"/>
</dbReference>
<dbReference type="KEGG" id="dosa:Os06g0701600"/>
<dbReference type="eggNOG" id="KOG1341">
    <property type="taxonomic scope" value="Eukaryota"/>
</dbReference>
<dbReference type="HOGENOM" id="CLU_008384_2_0_1"/>
<dbReference type="InParanoid" id="Q8L4K5"/>
<dbReference type="OMA" id="FLAMMCI"/>
<dbReference type="OrthoDB" id="9999863at2759"/>
<dbReference type="Proteomes" id="UP000000763">
    <property type="component" value="Chromosome 6"/>
</dbReference>
<dbReference type="Proteomes" id="UP000007752">
    <property type="component" value="Chromosome 6"/>
</dbReference>
<dbReference type="Proteomes" id="UP000059680">
    <property type="component" value="Chromosome 6"/>
</dbReference>
<dbReference type="GO" id="GO:0005886">
    <property type="term" value="C:plasma membrane"/>
    <property type="evidence" value="ECO:0000314"/>
    <property type="project" value="UniProtKB"/>
</dbReference>
<dbReference type="GO" id="GO:0008324">
    <property type="term" value="F:monoatomic cation transmembrane transporter activity"/>
    <property type="evidence" value="ECO:0000318"/>
    <property type="project" value="GO_Central"/>
</dbReference>
<dbReference type="GO" id="GO:0015079">
    <property type="term" value="F:potassium ion transmembrane transporter activity"/>
    <property type="evidence" value="ECO:0000314"/>
    <property type="project" value="UniProtKB"/>
</dbReference>
<dbReference type="GO" id="GO:0071805">
    <property type="term" value="P:potassium ion transmembrane transport"/>
    <property type="evidence" value="ECO:0000314"/>
    <property type="project" value="UniProtKB"/>
</dbReference>
<dbReference type="InterPro" id="IPR003445">
    <property type="entry name" value="Cat_transpt"/>
</dbReference>
<dbReference type="InterPro" id="IPR051143">
    <property type="entry name" value="TrkH_K-transport"/>
</dbReference>
<dbReference type="PANTHER" id="PTHR31064:SF11">
    <property type="entry name" value="CATION TRANSPORTER HKT2_3-RELATED"/>
    <property type="match status" value="1"/>
</dbReference>
<dbReference type="PANTHER" id="PTHR31064">
    <property type="entry name" value="POTASSIUM TRANSPORT PROTEIN DDB_G0292412-RELATED"/>
    <property type="match status" value="1"/>
</dbReference>
<dbReference type="Pfam" id="PF02386">
    <property type="entry name" value="TrkH"/>
    <property type="match status" value="2"/>
</dbReference>
<feature type="chain" id="PRO_0000070473" description="Cation transporter HKT2;4">
    <location>
        <begin position="1"/>
        <end position="509"/>
    </location>
</feature>
<feature type="topological domain" description="Cytoplasmic" evidence="1">
    <location>
        <begin position="1"/>
        <end position="32"/>
    </location>
</feature>
<feature type="transmembrane region" description="Helical; Name=1" evidence="1">
    <location>
        <begin position="33"/>
        <end position="53"/>
    </location>
</feature>
<feature type="transmembrane region" description="Helical; Name=2" evidence="1">
    <location>
        <begin position="96"/>
        <end position="116"/>
    </location>
</feature>
<feature type="topological domain" description="Cytoplasmic" evidence="1">
    <location>
        <begin position="117"/>
        <end position="164"/>
    </location>
</feature>
<feature type="transmembrane region" description="Helical; Name=3" evidence="1">
    <location>
        <begin position="165"/>
        <end position="185"/>
    </location>
</feature>
<feature type="transmembrane region" description="Helical; Name=4" evidence="1">
    <location>
        <begin position="237"/>
        <end position="257"/>
    </location>
</feature>
<feature type="topological domain" description="Cytoplasmic" evidence="1">
    <location>
        <begin position="258"/>
        <end position="296"/>
    </location>
</feature>
<feature type="transmembrane region" description="Helical; Name=5" evidence="1">
    <location>
        <begin position="297"/>
        <end position="317"/>
    </location>
</feature>
<feature type="transmembrane region" description="Helical; Name=6" evidence="1">
    <location>
        <begin position="353"/>
        <end position="373"/>
    </location>
</feature>
<feature type="topological domain" description="Cytoplasmic" evidence="1">
    <location>
        <begin position="374"/>
        <end position="400"/>
    </location>
</feature>
<feature type="transmembrane region" description="Helical; Name=7" evidence="1">
    <location>
        <begin position="401"/>
        <end position="421"/>
    </location>
</feature>
<feature type="transmembrane region" description="Helical; Name=8" evidence="1">
    <location>
        <begin position="476"/>
        <end position="496"/>
    </location>
</feature>
<feature type="topological domain" description="Cytoplasmic" evidence="1">
    <location>
        <begin position="497"/>
        <end position="509"/>
    </location>
</feature>
<accession>Q8L4K5</accession>
<accession>Q0D9S4</accession>